<keyword id="KW-0028">Amino-acid biosynthesis</keyword>
<keyword id="KW-0368">Histidine biosynthesis</keyword>
<keyword id="KW-0378">Hydrolase</keyword>
<keyword id="KW-0486">Methionine biosynthesis</keyword>
<keyword id="KW-0511">Multifunctional enzyme</keyword>
<keyword id="KW-0521">NADP</keyword>
<keyword id="KW-0554">One-carbon metabolism</keyword>
<keyword id="KW-0560">Oxidoreductase</keyword>
<keyword id="KW-0658">Purine biosynthesis</keyword>
<keyword id="KW-1185">Reference proteome</keyword>
<feature type="chain" id="PRO_0000340572" description="Bifunctional protein FolD">
    <location>
        <begin position="1"/>
        <end position="295"/>
    </location>
</feature>
<feature type="binding site" evidence="1">
    <location>
        <begin position="169"/>
        <end position="171"/>
    </location>
    <ligand>
        <name>NADP(+)</name>
        <dbReference type="ChEBI" id="CHEBI:58349"/>
    </ligand>
</feature>
<feature type="binding site" evidence="1">
    <location>
        <position position="194"/>
    </location>
    <ligand>
        <name>NADP(+)</name>
        <dbReference type="ChEBI" id="CHEBI:58349"/>
    </ligand>
</feature>
<feature type="binding site" evidence="1">
    <location>
        <position position="235"/>
    </location>
    <ligand>
        <name>NADP(+)</name>
        <dbReference type="ChEBI" id="CHEBI:58349"/>
    </ligand>
</feature>
<organism>
    <name type="scientific">Acaryochloris marina (strain MBIC 11017)</name>
    <dbReference type="NCBI Taxonomy" id="329726"/>
    <lineage>
        <taxon>Bacteria</taxon>
        <taxon>Bacillati</taxon>
        <taxon>Cyanobacteriota</taxon>
        <taxon>Cyanophyceae</taxon>
        <taxon>Acaryochloridales</taxon>
        <taxon>Acaryochloridaceae</taxon>
        <taxon>Acaryochloris</taxon>
    </lineage>
</organism>
<accession>B0C3J3</accession>
<name>FOLD_ACAM1</name>
<reference key="1">
    <citation type="journal article" date="2008" name="Proc. Natl. Acad. Sci. U.S.A.">
        <title>Niche adaptation and genome expansion in the chlorophyll d-producing cyanobacterium Acaryochloris marina.</title>
        <authorList>
            <person name="Swingley W.D."/>
            <person name="Chen M."/>
            <person name="Cheung P.C."/>
            <person name="Conrad A.L."/>
            <person name="Dejesa L.C."/>
            <person name="Hao J."/>
            <person name="Honchak B.M."/>
            <person name="Karbach L.E."/>
            <person name="Kurdoglu A."/>
            <person name="Lahiri S."/>
            <person name="Mastrian S.D."/>
            <person name="Miyashita H."/>
            <person name="Page L."/>
            <person name="Ramakrishna P."/>
            <person name="Satoh S."/>
            <person name="Sattley W.M."/>
            <person name="Shimada Y."/>
            <person name="Taylor H.L."/>
            <person name="Tomo T."/>
            <person name="Tsuchiya T."/>
            <person name="Wang Z.T."/>
            <person name="Raymond J."/>
            <person name="Mimuro M."/>
            <person name="Blankenship R.E."/>
            <person name="Touchman J.W."/>
        </authorList>
    </citation>
    <scope>NUCLEOTIDE SEQUENCE [LARGE SCALE GENOMIC DNA]</scope>
    <source>
        <strain>MBIC 11017</strain>
    </source>
</reference>
<sequence>MPVESSKLLDGKGLAQKIQGELTAQIQTLQAEIGRPPGLAVLMVGDNPASAAYVRNKERACERLGIASFGHHFPAEVTFEEVKQTIHDLNANPQVDGILVQLPLPAHLDSTALLYEIDPDKDVDGLHPLNLGRLVRGEAGLRSCTPAGVMRLLAAYDVELSGLHAVVIGRSILVGKPVSLMLLAANATVTMAHSRTPDLAAVTRTADVLVAAVGKPGLITADMVKPGAVVIDVGISRQEIEGKARLVGDVEFTSVQSQSSLITPVPGGVGPITVSMLLENTVWSFRQRHKGSYNS</sequence>
<gene>
    <name evidence="1" type="primary">folD</name>
    <name type="ordered locus">AM1_4855</name>
</gene>
<evidence type="ECO:0000255" key="1">
    <source>
        <dbReference type="HAMAP-Rule" id="MF_01576"/>
    </source>
</evidence>
<proteinExistence type="inferred from homology"/>
<dbReference type="EC" id="1.5.1.5" evidence="1"/>
<dbReference type="EC" id="3.5.4.9" evidence="1"/>
<dbReference type="EMBL" id="CP000828">
    <property type="protein sequence ID" value="ABW29827.1"/>
    <property type="molecule type" value="Genomic_DNA"/>
</dbReference>
<dbReference type="RefSeq" id="WP_012165106.1">
    <property type="nucleotide sequence ID" value="NC_009925.1"/>
</dbReference>
<dbReference type="SMR" id="B0C3J3"/>
<dbReference type="STRING" id="329726.AM1_4855"/>
<dbReference type="KEGG" id="amr:AM1_4855"/>
<dbReference type="eggNOG" id="COG0190">
    <property type="taxonomic scope" value="Bacteria"/>
</dbReference>
<dbReference type="HOGENOM" id="CLU_034045_2_1_3"/>
<dbReference type="OrthoDB" id="9803580at2"/>
<dbReference type="UniPathway" id="UPA00193"/>
<dbReference type="Proteomes" id="UP000000268">
    <property type="component" value="Chromosome"/>
</dbReference>
<dbReference type="GO" id="GO:0005829">
    <property type="term" value="C:cytosol"/>
    <property type="evidence" value="ECO:0007669"/>
    <property type="project" value="TreeGrafter"/>
</dbReference>
<dbReference type="GO" id="GO:0004477">
    <property type="term" value="F:methenyltetrahydrofolate cyclohydrolase activity"/>
    <property type="evidence" value="ECO:0007669"/>
    <property type="project" value="UniProtKB-UniRule"/>
</dbReference>
<dbReference type="GO" id="GO:0004488">
    <property type="term" value="F:methylenetetrahydrofolate dehydrogenase (NADP+) activity"/>
    <property type="evidence" value="ECO:0007669"/>
    <property type="project" value="UniProtKB-UniRule"/>
</dbReference>
<dbReference type="GO" id="GO:0000105">
    <property type="term" value="P:L-histidine biosynthetic process"/>
    <property type="evidence" value="ECO:0007669"/>
    <property type="project" value="UniProtKB-KW"/>
</dbReference>
<dbReference type="GO" id="GO:0009086">
    <property type="term" value="P:methionine biosynthetic process"/>
    <property type="evidence" value="ECO:0007669"/>
    <property type="project" value="UniProtKB-KW"/>
</dbReference>
<dbReference type="GO" id="GO:0006164">
    <property type="term" value="P:purine nucleotide biosynthetic process"/>
    <property type="evidence" value="ECO:0007669"/>
    <property type="project" value="UniProtKB-KW"/>
</dbReference>
<dbReference type="GO" id="GO:0035999">
    <property type="term" value="P:tetrahydrofolate interconversion"/>
    <property type="evidence" value="ECO:0007669"/>
    <property type="project" value="UniProtKB-UniRule"/>
</dbReference>
<dbReference type="CDD" id="cd01080">
    <property type="entry name" value="NAD_bind_m-THF_DH_Cyclohyd"/>
    <property type="match status" value="1"/>
</dbReference>
<dbReference type="FunFam" id="3.40.50.720:FF:000094">
    <property type="entry name" value="Bifunctional protein FolD"/>
    <property type="match status" value="1"/>
</dbReference>
<dbReference type="FunFam" id="3.40.50.10860:FF:000005">
    <property type="entry name" value="C-1-tetrahydrofolate synthase, cytoplasmic, putative"/>
    <property type="match status" value="1"/>
</dbReference>
<dbReference type="Gene3D" id="3.40.50.10860">
    <property type="entry name" value="Leucine Dehydrogenase, chain A, domain 1"/>
    <property type="match status" value="1"/>
</dbReference>
<dbReference type="Gene3D" id="3.40.50.720">
    <property type="entry name" value="NAD(P)-binding Rossmann-like Domain"/>
    <property type="match status" value="1"/>
</dbReference>
<dbReference type="HAMAP" id="MF_01576">
    <property type="entry name" value="THF_DHG_CYH"/>
    <property type="match status" value="1"/>
</dbReference>
<dbReference type="InterPro" id="IPR046346">
    <property type="entry name" value="Aminoacid_DH-like_N_sf"/>
</dbReference>
<dbReference type="InterPro" id="IPR036291">
    <property type="entry name" value="NAD(P)-bd_dom_sf"/>
</dbReference>
<dbReference type="InterPro" id="IPR000672">
    <property type="entry name" value="THF_DH/CycHdrlase"/>
</dbReference>
<dbReference type="InterPro" id="IPR020630">
    <property type="entry name" value="THF_DH/CycHdrlase_cat_dom"/>
</dbReference>
<dbReference type="InterPro" id="IPR020867">
    <property type="entry name" value="THF_DH/CycHdrlase_CS"/>
</dbReference>
<dbReference type="InterPro" id="IPR020631">
    <property type="entry name" value="THF_DH/CycHdrlase_NAD-bd_dom"/>
</dbReference>
<dbReference type="NCBIfam" id="NF010783">
    <property type="entry name" value="PRK14186.1"/>
    <property type="match status" value="1"/>
</dbReference>
<dbReference type="PANTHER" id="PTHR48099:SF5">
    <property type="entry name" value="C-1-TETRAHYDROFOLATE SYNTHASE, CYTOPLASMIC"/>
    <property type="match status" value="1"/>
</dbReference>
<dbReference type="PANTHER" id="PTHR48099">
    <property type="entry name" value="C-1-TETRAHYDROFOLATE SYNTHASE, CYTOPLASMIC-RELATED"/>
    <property type="match status" value="1"/>
</dbReference>
<dbReference type="Pfam" id="PF00763">
    <property type="entry name" value="THF_DHG_CYH"/>
    <property type="match status" value="1"/>
</dbReference>
<dbReference type="Pfam" id="PF02882">
    <property type="entry name" value="THF_DHG_CYH_C"/>
    <property type="match status" value="1"/>
</dbReference>
<dbReference type="PRINTS" id="PR00085">
    <property type="entry name" value="THFDHDRGNASE"/>
</dbReference>
<dbReference type="SUPFAM" id="SSF53223">
    <property type="entry name" value="Aminoacid dehydrogenase-like, N-terminal domain"/>
    <property type="match status" value="1"/>
</dbReference>
<dbReference type="SUPFAM" id="SSF51735">
    <property type="entry name" value="NAD(P)-binding Rossmann-fold domains"/>
    <property type="match status" value="1"/>
</dbReference>
<dbReference type="PROSITE" id="PS00767">
    <property type="entry name" value="THF_DHG_CYH_2"/>
    <property type="match status" value="1"/>
</dbReference>
<protein>
    <recommendedName>
        <fullName evidence="1">Bifunctional protein FolD</fullName>
    </recommendedName>
    <domain>
        <recommendedName>
            <fullName evidence="1">Methylenetetrahydrofolate dehydrogenase</fullName>
            <ecNumber evidence="1">1.5.1.5</ecNumber>
        </recommendedName>
    </domain>
    <domain>
        <recommendedName>
            <fullName evidence="1">Methenyltetrahydrofolate cyclohydrolase</fullName>
            <ecNumber evidence="1">3.5.4.9</ecNumber>
        </recommendedName>
    </domain>
</protein>
<comment type="function">
    <text evidence="1">Catalyzes the oxidation of 5,10-methylenetetrahydrofolate to 5,10-methenyltetrahydrofolate and then the hydrolysis of 5,10-methenyltetrahydrofolate to 10-formyltetrahydrofolate.</text>
</comment>
<comment type="catalytic activity">
    <reaction evidence="1">
        <text>(6R)-5,10-methylene-5,6,7,8-tetrahydrofolate + NADP(+) = (6R)-5,10-methenyltetrahydrofolate + NADPH</text>
        <dbReference type="Rhea" id="RHEA:22812"/>
        <dbReference type="ChEBI" id="CHEBI:15636"/>
        <dbReference type="ChEBI" id="CHEBI:57455"/>
        <dbReference type="ChEBI" id="CHEBI:57783"/>
        <dbReference type="ChEBI" id="CHEBI:58349"/>
        <dbReference type="EC" id="1.5.1.5"/>
    </reaction>
</comment>
<comment type="catalytic activity">
    <reaction evidence="1">
        <text>(6R)-5,10-methenyltetrahydrofolate + H2O = (6R)-10-formyltetrahydrofolate + H(+)</text>
        <dbReference type="Rhea" id="RHEA:23700"/>
        <dbReference type="ChEBI" id="CHEBI:15377"/>
        <dbReference type="ChEBI" id="CHEBI:15378"/>
        <dbReference type="ChEBI" id="CHEBI:57455"/>
        <dbReference type="ChEBI" id="CHEBI:195366"/>
        <dbReference type="EC" id="3.5.4.9"/>
    </reaction>
</comment>
<comment type="pathway">
    <text evidence="1">One-carbon metabolism; tetrahydrofolate interconversion.</text>
</comment>
<comment type="subunit">
    <text evidence="1">Homodimer.</text>
</comment>
<comment type="similarity">
    <text evidence="1">Belongs to the tetrahydrofolate dehydrogenase/cyclohydrolase family.</text>
</comment>